<sequence length="193" mass="21068">MRLCDRDIEAWLDSGKLGIDPRPPVERINGATVDVRLGNKFRVFLGHTAGFIDLSGPKDEVSAALERVMSDEIILPEGEAFFLHPGELALAVTLESVTIPDDLVGWLDGRSSLARLGLMVHVTAHRIDPGWQGRIVLEFYNSGKLPLALRPGMLIGALSFEPLSGPAARPYNSRQDAKYRGQQGAVASRIDKD</sequence>
<name>DCD_YERE8</name>
<dbReference type="EC" id="3.5.4.13" evidence="1"/>
<dbReference type="EMBL" id="AM286415">
    <property type="protein sequence ID" value="CAL12815.1"/>
    <property type="molecule type" value="Genomic_DNA"/>
</dbReference>
<dbReference type="RefSeq" id="WP_005168320.1">
    <property type="nucleotide sequence ID" value="NC_008800.1"/>
</dbReference>
<dbReference type="RefSeq" id="YP_001006972.1">
    <property type="nucleotide sequence ID" value="NC_008800.1"/>
</dbReference>
<dbReference type="SMR" id="A1JTX3"/>
<dbReference type="GeneID" id="82550639"/>
<dbReference type="KEGG" id="yen:YE2782"/>
<dbReference type="PATRIC" id="fig|393305.7.peg.2956"/>
<dbReference type="eggNOG" id="COG0717">
    <property type="taxonomic scope" value="Bacteria"/>
</dbReference>
<dbReference type="HOGENOM" id="CLU_087476_2_0_6"/>
<dbReference type="OrthoDB" id="9780956at2"/>
<dbReference type="UniPathway" id="UPA00610">
    <property type="reaction ID" value="UER00665"/>
</dbReference>
<dbReference type="Proteomes" id="UP000000642">
    <property type="component" value="Chromosome"/>
</dbReference>
<dbReference type="GO" id="GO:0008829">
    <property type="term" value="F:dCTP deaminase activity"/>
    <property type="evidence" value="ECO:0007669"/>
    <property type="project" value="UniProtKB-UniRule"/>
</dbReference>
<dbReference type="GO" id="GO:0000166">
    <property type="term" value="F:nucleotide binding"/>
    <property type="evidence" value="ECO:0007669"/>
    <property type="project" value="UniProtKB-KW"/>
</dbReference>
<dbReference type="GO" id="GO:0006226">
    <property type="term" value="P:dUMP biosynthetic process"/>
    <property type="evidence" value="ECO:0007669"/>
    <property type="project" value="UniProtKB-UniPathway"/>
</dbReference>
<dbReference type="GO" id="GO:0006229">
    <property type="term" value="P:dUTP biosynthetic process"/>
    <property type="evidence" value="ECO:0007669"/>
    <property type="project" value="UniProtKB-UniRule"/>
</dbReference>
<dbReference type="GO" id="GO:0015949">
    <property type="term" value="P:nucleobase-containing small molecule interconversion"/>
    <property type="evidence" value="ECO:0007669"/>
    <property type="project" value="TreeGrafter"/>
</dbReference>
<dbReference type="CDD" id="cd07557">
    <property type="entry name" value="trimeric_dUTPase"/>
    <property type="match status" value="1"/>
</dbReference>
<dbReference type="FunFam" id="2.70.40.10:FF:000003">
    <property type="entry name" value="dCTP deaminase"/>
    <property type="match status" value="1"/>
</dbReference>
<dbReference type="Gene3D" id="2.70.40.10">
    <property type="match status" value="1"/>
</dbReference>
<dbReference type="HAMAP" id="MF_00146">
    <property type="entry name" value="dCTP_deaminase"/>
    <property type="match status" value="1"/>
</dbReference>
<dbReference type="InterPro" id="IPR011962">
    <property type="entry name" value="dCTP_deaminase"/>
</dbReference>
<dbReference type="InterPro" id="IPR036157">
    <property type="entry name" value="dUTPase-like_sf"/>
</dbReference>
<dbReference type="InterPro" id="IPR033704">
    <property type="entry name" value="dUTPase_trimeric"/>
</dbReference>
<dbReference type="NCBIfam" id="TIGR02274">
    <property type="entry name" value="dCTP_deam"/>
    <property type="match status" value="1"/>
</dbReference>
<dbReference type="PANTHER" id="PTHR42680">
    <property type="entry name" value="DCTP DEAMINASE"/>
    <property type="match status" value="1"/>
</dbReference>
<dbReference type="PANTHER" id="PTHR42680:SF3">
    <property type="entry name" value="DCTP DEAMINASE"/>
    <property type="match status" value="1"/>
</dbReference>
<dbReference type="Pfam" id="PF22769">
    <property type="entry name" value="DCD"/>
    <property type="match status" value="1"/>
</dbReference>
<dbReference type="SUPFAM" id="SSF51283">
    <property type="entry name" value="dUTPase-like"/>
    <property type="match status" value="1"/>
</dbReference>
<evidence type="ECO:0000255" key="1">
    <source>
        <dbReference type="HAMAP-Rule" id="MF_00146"/>
    </source>
</evidence>
<evidence type="ECO:0000256" key="2">
    <source>
        <dbReference type="SAM" id="MobiDB-lite"/>
    </source>
</evidence>
<reference key="1">
    <citation type="journal article" date="2006" name="PLoS Genet.">
        <title>The complete genome sequence and comparative genome analysis of the high pathogenicity Yersinia enterocolitica strain 8081.</title>
        <authorList>
            <person name="Thomson N.R."/>
            <person name="Howard S."/>
            <person name="Wren B.W."/>
            <person name="Holden M.T.G."/>
            <person name="Crossman L."/>
            <person name="Challis G.L."/>
            <person name="Churcher C."/>
            <person name="Mungall K."/>
            <person name="Brooks K."/>
            <person name="Chillingworth T."/>
            <person name="Feltwell T."/>
            <person name="Abdellah Z."/>
            <person name="Hauser H."/>
            <person name="Jagels K."/>
            <person name="Maddison M."/>
            <person name="Moule S."/>
            <person name="Sanders M."/>
            <person name="Whitehead S."/>
            <person name="Quail M.A."/>
            <person name="Dougan G."/>
            <person name="Parkhill J."/>
            <person name="Prentice M.B."/>
        </authorList>
    </citation>
    <scope>NUCLEOTIDE SEQUENCE [LARGE SCALE GENOMIC DNA]</scope>
    <source>
        <strain>NCTC 13174 / 8081</strain>
    </source>
</reference>
<protein>
    <recommendedName>
        <fullName evidence="1">dCTP deaminase</fullName>
        <ecNumber evidence="1">3.5.4.13</ecNumber>
    </recommendedName>
    <alternativeName>
        <fullName evidence="1">Deoxycytidine triphosphate deaminase</fullName>
    </alternativeName>
</protein>
<keyword id="KW-0378">Hydrolase</keyword>
<keyword id="KW-0546">Nucleotide metabolism</keyword>
<keyword id="KW-0547">Nucleotide-binding</keyword>
<feature type="chain" id="PRO_1000009833" description="dCTP deaminase">
    <location>
        <begin position="1"/>
        <end position="193"/>
    </location>
</feature>
<feature type="region of interest" description="Disordered" evidence="2">
    <location>
        <begin position="170"/>
        <end position="193"/>
    </location>
</feature>
<feature type="active site" description="Proton donor/acceptor" evidence="1">
    <location>
        <position position="138"/>
    </location>
</feature>
<feature type="binding site" evidence="1">
    <location>
        <begin position="110"/>
        <end position="115"/>
    </location>
    <ligand>
        <name>dCTP</name>
        <dbReference type="ChEBI" id="CHEBI:61481"/>
    </ligand>
</feature>
<feature type="binding site" evidence="1">
    <location>
        <position position="128"/>
    </location>
    <ligand>
        <name>dCTP</name>
        <dbReference type="ChEBI" id="CHEBI:61481"/>
    </ligand>
</feature>
<feature type="binding site" evidence="1">
    <location>
        <begin position="136"/>
        <end position="138"/>
    </location>
    <ligand>
        <name>dCTP</name>
        <dbReference type="ChEBI" id="CHEBI:61481"/>
    </ligand>
</feature>
<feature type="binding site" evidence="1">
    <location>
        <position position="171"/>
    </location>
    <ligand>
        <name>dCTP</name>
        <dbReference type="ChEBI" id="CHEBI:61481"/>
    </ligand>
</feature>
<feature type="binding site" evidence="1">
    <location>
        <position position="178"/>
    </location>
    <ligand>
        <name>dCTP</name>
        <dbReference type="ChEBI" id="CHEBI:61481"/>
    </ligand>
</feature>
<feature type="binding site" evidence="1">
    <location>
        <position position="182"/>
    </location>
    <ligand>
        <name>dCTP</name>
        <dbReference type="ChEBI" id="CHEBI:61481"/>
    </ligand>
</feature>
<proteinExistence type="inferred from homology"/>
<gene>
    <name evidence="1" type="primary">dcd</name>
    <name type="ordered locus">YE2782</name>
</gene>
<accession>A1JTX3</accession>
<comment type="function">
    <text evidence="1">Catalyzes the deamination of dCTP to dUTP.</text>
</comment>
<comment type="catalytic activity">
    <reaction evidence="1">
        <text>dCTP + H2O + H(+) = dUTP + NH4(+)</text>
        <dbReference type="Rhea" id="RHEA:22680"/>
        <dbReference type="ChEBI" id="CHEBI:15377"/>
        <dbReference type="ChEBI" id="CHEBI:15378"/>
        <dbReference type="ChEBI" id="CHEBI:28938"/>
        <dbReference type="ChEBI" id="CHEBI:61481"/>
        <dbReference type="ChEBI" id="CHEBI:61555"/>
        <dbReference type="EC" id="3.5.4.13"/>
    </reaction>
</comment>
<comment type="pathway">
    <text evidence="1">Pyrimidine metabolism; dUMP biosynthesis; dUMP from dCTP (dUTP route): step 1/2.</text>
</comment>
<comment type="subunit">
    <text evidence="1">Homotrimer.</text>
</comment>
<comment type="similarity">
    <text evidence="1">Belongs to the dCTP deaminase family.</text>
</comment>
<organism>
    <name type="scientific">Yersinia enterocolitica serotype O:8 / biotype 1B (strain NCTC 13174 / 8081)</name>
    <dbReference type="NCBI Taxonomy" id="393305"/>
    <lineage>
        <taxon>Bacteria</taxon>
        <taxon>Pseudomonadati</taxon>
        <taxon>Pseudomonadota</taxon>
        <taxon>Gammaproteobacteria</taxon>
        <taxon>Enterobacterales</taxon>
        <taxon>Yersiniaceae</taxon>
        <taxon>Yersinia</taxon>
    </lineage>
</organism>